<evidence type="ECO:0000255" key="1">
    <source>
        <dbReference type="HAMAP-Rule" id="MF_00583"/>
    </source>
</evidence>
<dbReference type="EC" id="2.7.6.1" evidence="1"/>
<dbReference type="EMBL" id="AE016825">
    <property type="protein sequence ID" value="AAQ61718.1"/>
    <property type="molecule type" value="Genomic_DNA"/>
</dbReference>
<dbReference type="RefSeq" id="WP_011137605.1">
    <property type="nucleotide sequence ID" value="NC_005085.1"/>
</dbReference>
<dbReference type="SMR" id="Q7NQS9"/>
<dbReference type="STRING" id="243365.CV_4058"/>
<dbReference type="KEGG" id="cvi:CV_4058"/>
<dbReference type="eggNOG" id="COG0462">
    <property type="taxonomic scope" value="Bacteria"/>
</dbReference>
<dbReference type="HOGENOM" id="CLU_033546_2_0_4"/>
<dbReference type="OrthoDB" id="9777067at2"/>
<dbReference type="UniPathway" id="UPA00087">
    <property type="reaction ID" value="UER00172"/>
</dbReference>
<dbReference type="Proteomes" id="UP000001424">
    <property type="component" value="Chromosome"/>
</dbReference>
<dbReference type="GO" id="GO:0005737">
    <property type="term" value="C:cytoplasm"/>
    <property type="evidence" value="ECO:0007669"/>
    <property type="project" value="UniProtKB-SubCell"/>
</dbReference>
<dbReference type="GO" id="GO:0002189">
    <property type="term" value="C:ribose phosphate diphosphokinase complex"/>
    <property type="evidence" value="ECO:0007669"/>
    <property type="project" value="TreeGrafter"/>
</dbReference>
<dbReference type="GO" id="GO:0005524">
    <property type="term" value="F:ATP binding"/>
    <property type="evidence" value="ECO:0007669"/>
    <property type="project" value="UniProtKB-KW"/>
</dbReference>
<dbReference type="GO" id="GO:0016301">
    <property type="term" value="F:kinase activity"/>
    <property type="evidence" value="ECO:0007669"/>
    <property type="project" value="UniProtKB-KW"/>
</dbReference>
<dbReference type="GO" id="GO:0000287">
    <property type="term" value="F:magnesium ion binding"/>
    <property type="evidence" value="ECO:0007669"/>
    <property type="project" value="UniProtKB-UniRule"/>
</dbReference>
<dbReference type="GO" id="GO:0004749">
    <property type="term" value="F:ribose phosphate diphosphokinase activity"/>
    <property type="evidence" value="ECO:0007669"/>
    <property type="project" value="UniProtKB-UniRule"/>
</dbReference>
<dbReference type="GO" id="GO:0006015">
    <property type="term" value="P:5-phosphoribose 1-diphosphate biosynthetic process"/>
    <property type="evidence" value="ECO:0007669"/>
    <property type="project" value="UniProtKB-UniRule"/>
</dbReference>
<dbReference type="GO" id="GO:0006164">
    <property type="term" value="P:purine nucleotide biosynthetic process"/>
    <property type="evidence" value="ECO:0007669"/>
    <property type="project" value="TreeGrafter"/>
</dbReference>
<dbReference type="GO" id="GO:0009156">
    <property type="term" value="P:ribonucleoside monophosphate biosynthetic process"/>
    <property type="evidence" value="ECO:0007669"/>
    <property type="project" value="InterPro"/>
</dbReference>
<dbReference type="CDD" id="cd06223">
    <property type="entry name" value="PRTases_typeI"/>
    <property type="match status" value="1"/>
</dbReference>
<dbReference type="FunFam" id="3.40.50.2020:FF:000001">
    <property type="entry name" value="Ribose-phosphate pyrophosphokinase"/>
    <property type="match status" value="1"/>
</dbReference>
<dbReference type="Gene3D" id="3.40.50.2020">
    <property type="match status" value="2"/>
</dbReference>
<dbReference type="HAMAP" id="MF_00583_B">
    <property type="entry name" value="RibP_PPkinase_B"/>
    <property type="match status" value="1"/>
</dbReference>
<dbReference type="InterPro" id="IPR000842">
    <property type="entry name" value="PRib_PP_synth_CS"/>
</dbReference>
<dbReference type="InterPro" id="IPR029099">
    <property type="entry name" value="Pribosyltran_N"/>
</dbReference>
<dbReference type="InterPro" id="IPR000836">
    <property type="entry name" value="PRibTrfase_dom"/>
</dbReference>
<dbReference type="InterPro" id="IPR029057">
    <property type="entry name" value="PRTase-like"/>
</dbReference>
<dbReference type="InterPro" id="IPR005946">
    <property type="entry name" value="Rib-P_diPkinase"/>
</dbReference>
<dbReference type="InterPro" id="IPR037515">
    <property type="entry name" value="Rib-P_diPkinase_bac"/>
</dbReference>
<dbReference type="NCBIfam" id="NF002320">
    <property type="entry name" value="PRK01259.1"/>
    <property type="match status" value="1"/>
</dbReference>
<dbReference type="NCBIfam" id="TIGR01251">
    <property type="entry name" value="ribP_PPkin"/>
    <property type="match status" value="1"/>
</dbReference>
<dbReference type="PANTHER" id="PTHR10210">
    <property type="entry name" value="RIBOSE-PHOSPHATE DIPHOSPHOKINASE FAMILY MEMBER"/>
    <property type="match status" value="1"/>
</dbReference>
<dbReference type="PANTHER" id="PTHR10210:SF41">
    <property type="entry name" value="RIBOSE-PHOSPHATE PYROPHOSPHOKINASE 1, CHLOROPLASTIC"/>
    <property type="match status" value="1"/>
</dbReference>
<dbReference type="Pfam" id="PF14572">
    <property type="entry name" value="Pribosyl_synth"/>
    <property type="match status" value="1"/>
</dbReference>
<dbReference type="Pfam" id="PF13793">
    <property type="entry name" value="Pribosyltran_N"/>
    <property type="match status" value="1"/>
</dbReference>
<dbReference type="SMART" id="SM01400">
    <property type="entry name" value="Pribosyltran_N"/>
    <property type="match status" value="1"/>
</dbReference>
<dbReference type="SUPFAM" id="SSF53271">
    <property type="entry name" value="PRTase-like"/>
    <property type="match status" value="1"/>
</dbReference>
<dbReference type="PROSITE" id="PS00114">
    <property type="entry name" value="PRPP_SYNTHASE"/>
    <property type="match status" value="1"/>
</dbReference>
<comment type="function">
    <text evidence="1">Involved in the biosynthesis of the central metabolite phospho-alpha-D-ribosyl-1-pyrophosphate (PRPP) via the transfer of pyrophosphoryl group from ATP to 1-hydroxyl of ribose-5-phosphate (Rib-5-P).</text>
</comment>
<comment type="catalytic activity">
    <reaction evidence="1">
        <text>D-ribose 5-phosphate + ATP = 5-phospho-alpha-D-ribose 1-diphosphate + AMP + H(+)</text>
        <dbReference type="Rhea" id="RHEA:15609"/>
        <dbReference type="ChEBI" id="CHEBI:15378"/>
        <dbReference type="ChEBI" id="CHEBI:30616"/>
        <dbReference type="ChEBI" id="CHEBI:58017"/>
        <dbReference type="ChEBI" id="CHEBI:78346"/>
        <dbReference type="ChEBI" id="CHEBI:456215"/>
        <dbReference type="EC" id="2.7.6.1"/>
    </reaction>
</comment>
<comment type="cofactor">
    <cofactor evidence="1">
        <name>Mg(2+)</name>
        <dbReference type="ChEBI" id="CHEBI:18420"/>
    </cofactor>
    <text evidence="1">Binds 2 Mg(2+) ions per subunit.</text>
</comment>
<comment type="pathway">
    <text evidence="1">Metabolic intermediate biosynthesis; 5-phospho-alpha-D-ribose 1-diphosphate biosynthesis; 5-phospho-alpha-D-ribose 1-diphosphate from D-ribose 5-phosphate (route I): step 1/1.</text>
</comment>
<comment type="subunit">
    <text evidence="1">Homohexamer.</text>
</comment>
<comment type="subcellular location">
    <subcellularLocation>
        <location evidence="1">Cytoplasm</location>
    </subcellularLocation>
</comment>
<comment type="similarity">
    <text evidence="1">Belongs to the ribose-phosphate pyrophosphokinase family. Class I subfamily.</text>
</comment>
<name>KPRS_CHRVO</name>
<sequence>MAAYDSLMVFTGTANPELAQNVVKHLDISLGRADVGKFSDGEVAVELLENVRGRDVFILQSTCAPTNDNLMEILTMADALKRASAGRITAAIPYFGYARQDRRPRSARVPISAKLVANMLTSAGIDRVLTVDLHADQIQGFFDIPVDNVYATPVLLKDIRAQRFDDLIVVSPDVGGVVRARAVAKALNTDLAIIDKRRPKANVAEVMNIIGDVSGRTCLIVDDMIDTANTLCKAASALKERGAERVLAYATHAIFSGQAVDRIKNSDIDMVVVTDTIPLTAAAKACPNIRVASIAGLLAETLRRINNEESVSYLFNEELVATGACLP</sequence>
<reference key="1">
    <citation type="journal article" date="2003" name="Proc. Natl. Acad. Sci. U.S.A.">
        <title>The complete genome sequence of Chromobacterium violaceum reveals remarkable and exploitable bacterial adaptability.</title>
        <authorList>
            <person name="Vasconcelos A.T.R."/>
            <person name="de Almeida D.F."/>
            <person name="Hungria M."/>
            <person name="Guimaraes C.T."/>
            <person name="Antonio R.V."/>
            <person name="Almeida F.C."/>
            <person name="de Almeida L.G.P."/>
            <person name="de Almeida R."/>
            <person name="Alves-Gomes J.A."/>
            <person name="Andrade E.M."/>
            <person name="Araripe J."/>
            <person name="de Araujo M.F.F."/>
            <person name="Astolfi-Filho S."/>
            <person name="Azevedo V."/>
            <person name="Baptista A.J."/>
            <person name="Bataus L.A.M."/>
            <person name="Batista J.S."/>
            <person name="Belo A."/>
            <person name="van den Berg C."/>
            <person name="Bogo M."/>
            <person name="Bonatto S."/>
            <person name="Bordignon J."/>
            <person name="Brigido M.M."/>
            <person name="Brito C.A."/>
            <person name="Brocchi M."/>
            <person name="Burity H.A."/>
            <person name="Camargo A.A."/>
            <person name="Cardoso D.D.P."/>
            <person name="Carneiro N.P."/>
            <person name="Carraro D.M."/>
            <person name="Carvalho C.M.B."/>
            <person name="Cascardo J.C.M."/>
            <person name="Cavada B.S."/>
            <person name="Chueire L.M.O."/>
            <person name="Creczynski-Pasa T.B."/>
            <person name="Cunha-Junior N.C."/>
            <person name="Fagundes N."/>
            <person name="Falcao C.L."/>
            <person name="Fantinatti F."/>
            <person name="Farias I.P."/>
            <person name="Felipe M.S.S."/>
            <person name="Ferrari L.P."/>
            <person name="Ferro J.A."/>
            <person name="Ferro M.I.T."/>
            <person name="Franco G.R."/>
            <person name="Freitas N.S.A."/>
            <person name="Furlan L.R."/>
            <person name="Gazzinelli R.T."/>
            <person name="Gomes E.A."/>
            <person name="Goncalves P.R."/>
            <person name="Grangeiro T.B."/>
            <person name="Grattapaglia D."/>
            <person name="Grisard E.C."/>
            <person name="Hanna E.S."/>
            <person name="Jardim S.N."/>
            <person name="Laurino J."/>
            <person name="Leoi L.C.T."/>
            <person name="Lima L.F.A."/>
            <person name="Loureiro M.F."/>
            <person name="Lyra M.C.C.P."/>
            <person name="Madeira H.M.F."/>
            <person name="Manfio G.P."/>
            <person name="Maranhao A.Q."/>
            <person name="Martins W.S."/>
            <person name="di Mauro S.M.Z."/>
            <person name="de Medeiros S.R.B."/>
            <person name="Meissner R.V."/>
            <person name="Moreira M.A.M."/>
            <person name="Nascimento F.F."/>
            <person name="Nicolas M.F."/>
            <person name="Oliveira J.G."/>
            <person name="Oliveira S.C."/>
            <person name="Paixao R.F.C."/>
            <person name="Parente J.A."/>
            <person name="Pedrosa F.O."/>
            <person name="Pena S.D.J."/>
            <person name="Pereira J.O."/>
            <person name="Pereira M."/>
            <person name="Pinto L.S.R.C."/>
            <person name="Pinto L.S."/>
            <person name="Porto J.I.R."/>
            <person name="Potrich D.P."/>
            <person name="Ramalho-Neto C.E."/>
            <person name="Reis A.M.M."/>
            <person name="Rigo L.U."/>
            <person name="Rondinelli E."/>
            <person name="Santos E.B.P."/>
            <person name="Santos F.R."/>
            <person name="Schneider M.P.C."/>
            <person name="Seuanez H.N."/>
            <person name="Silva A.M.R."/>
            <person name="da Silva A.L.C."/>
            <person name="Silva D.W."/>
            <person name="Silva R."/>
            <person name="Simoes I.C."/>
            <person name="Simon D."/>
            <person name="Soares C.M.A."/>
            <person name="Soares R.B.A."/>
            <person name="Souza E.M."/>
            <person name="Souza K.R.L."/>
            <person name="Souza R.C."/>
            <person name="Steffens M.B.R."/>
            <person name="Steindel M."/>
            <person name="Teixeira S.R."/>
            <person name="Urmenyi T."/>
            <person name="Vettore A."/>
            <person name="Wassem R."/>
            <person name="Zaha A."/>
            <person name="Simpson A.J.G."/>
        </authorList>
    </citation>
    <scope>NUCLEOTIDE SEQUENCE [LARGE SCALE GENOMIC DNA]</scope>
    <source>
        <strain>ATCC 12472 / DSM 30191 / JCM 1249 / CCUG 213 / NBRC 12614 / NCIMB 9131 / NCTC 9757 / MK</strain>
    </source>
</reference>
<gene>
    <name evidence="1" type="primary">prs</name>
    <name type="synonym">prsA</name>
    <name type="ordered locus">CV_4058</name>
</gene>
<keyword id="KW-0067">ATP-binding</keyword>
<keyword id="KW-0963">Cytoplasm</keyword>
<keyword id="KW-0418">Kinase</keyword>
<keyword id="KW-0460">Magnesium</keyword>
<keyword id="KW-0479">Metal-binding</keyword>
<keyword id="KW-0545">Nucleotide biosynthesis</keyword>
<keyword id="KW-0547">Nucleotide-binding</keyword>
<keyword id="KW-1185">Reference proteome</keyword>
<keyword id="KW-0808">Transferase</keyword>
<proteinExistence type="inferred from homology"/>
<protein>
    <recommendedName>
        <fullName evidence="1">Ribose-phosphate pyrophosphokinase</fullName>
        <shortName evidence="1">RPPK</shortName>
        <ecNumber evidence="1">2.7.6.1</ecNumber>
    </recommendedName>
    <alternativeName>
        <fullName evidence="1">5-phospho-D-ribosyl alpha-1-diphosphate synthase</fullName>
    </alternativeName>
    <alternativeName>
        <fullName evidence="1">Phosphoribosyl diphosphate synthase</fullName>
    </alternativeName>
    <alternativeName>
        <fullName evidence="1">Phosphoribosyl pyrophosphate synthase</fullName>
        <shortName evidence="1">P-Rib-PP synthase</shortName>
        <shortName evidence="1">PRPP synthase</shortName>
        <shortName evidence="1">PRPPase</shortName>
    </alternativeName>
</protein>
<organism>
    <name type="scientific">Chromobacterium violaceum (strain ATCC 12472 / DSM 30191 / JCM 1249 / CCUG 213 / NBRC 12614 / NCIMB 9131 / NCTC 9757 / MK)</name>
    <dbReference type="NCBI Taxonomy" id="243365"/>
    <lineage>
        <taxon>Bacteria</taxon>
        <taxon>Pseudomonadati</taxon>
        <taxon>Pseudomonadota</taxon>
        <taxon>Betaproteobacteria</taxon>
        <taxon>Neisseriales</taxon>
        <taxon>Chromobacteriaceae</taxon>
        <taxon>Chromobacterium</taxon>
    </lineage>
</organism>
<feature type="chain" id="PRO_0000141125" description="Ribose-phosphate pyrophosphokinase">
    <location>
        <begin position="1"/>
        <end position="327"/>
    </location>
</feature>
<feature type="active site" evidence="1">
    <location>
        <position position="196"/>
    </location>
</feature>
<feature type="binding site" evidence="1">
    <location>
        <begin position="40"/>
        <end position="42"/>
    </location>
    <ligand>
        <name>ATP</name>
        <dbReference type="ChEBI" id="CHEBI:30616"/>
    </ligand>
</feature>
<feature type="binding site" evidence="1">
    <location>
        <begin position="99"/>
        <end position="100"/>
    </location>
    <ligand>
        <name>ATP</name>
        <dbReference type="ChEBI" id="CHEBI:30616"/>
    </ligand>
</feature>
<feature type="binding site" evidence="1">
    <location>
        <position position="134"/>
    </location>
    <ligand>
        <name>Mg(2+)</name>
        <dbReference type="ChEBI" id="CHEBI:18420"/>
        <label>1</label>
    </ligand>
</feature>
<feature type="binding site" evidence="1">
    <location>
        <position position="173"/>
    </location>
    <ligand>
        <name>Mg(2+)</name>
        <dbReference type="ChEBI" id="CHEBI:18420"/>
        <label>2</label>
    </ligand>
</feature>
<feature type="binding site" evidence="1">
    <location>
        <position position="198"/>
    </location>
    <ligand>
        <name>D-ribose 5-phosphate</name>
        <dbReference type="ChEBI" id="CHEBI:78346"/>
    </ligand>
</feature>
<feature type="binding site" evidence="1">
    <location>
        <position position="222"/>
    </location>
    <ligand>
        <name>D-ribose 5-phosphate</name>
        <dbReference type="ChEBI" id="CHEBI:78346"/>
    </ligand>
</feature>
<feature type="binding site" evidence="1">
    <location>
        <begin position="226"/>
        <end position="230"/>
    </location>
    <ligand>
        <name>D-ribose 5-phosphate</name>
        <dbReference type="ChEBI" id="CHEBI:78346"/>
    </ligand>
</feature>
<accession>Q7NQS9</accession>